<reference key="1">
    <citation type="journal article" date="2004" name="Nat. Genet.">
        <title>Complete sequencing and characterization of 21,243 full-length human cDNAs.</title>
        <authorList>
            <person name="Ota T."/>
            <person name="Suzuki Y."/>
            <person name="Nishikawa T."/>
            <person name="Otsuki T."/>
            <person name="Sugiyama T."/>
            <person name="Irie R."/>
            <person name="Wakamatsu A."/>
            <person name="Hayashi K."/>
            <person name="Sato H."/>
            <person name="Nagai K."/>
            <person name="Kimura K."/>
            <person name="Makita H."/>
            <person name="Sekine M."/>
            <person name="Obayashi M."/>
            <person name="Nishi T."/>
            <person name="Shibahara T."/>
            <person name="Tanaka T."/>
            <person name="Ishii S."/>
            <person name="Yamamoto J."/>
            <person name="Saito K."/>
            <person name="Kawai Y."/>
            <person name="Isono Y."/>
            <person name="Nakamura Y."/>
            <person name="Nagahari K."/>
            <person name="Murakami K."/>
            <person name="Yasuda T."/>
            <person name="Iwayanagi T."/>
            <person name="Wagatsuma M."/>
            <person name="Shiratori A."/>
            <person name="Sudo H."/>
            <person name="Hosoiri T."/>
            <person name="Kaku Y."/>
            <person name="Kodaira H."/>
            <person name="Kondo H."/>
            <person name="Sugawara M."/>
            <person name="Takahashi M."/>
            <person name="Kanda K."/>
            <person name="Yokoi T."/>
            <person name="Furuya T."/>
            <person name="Kikkawa E."/>
            <person name="Omura Y."/>
            <person name="Abe K."/>
            <person name="Kamihara K."/>
            <person name="Katsuta N."/>
            <person name="Sato K."/>
            <person name="Tanikawa M."/>
            <person name="Yamazaki M."/>
            <person name="Ninomiya K."/>
            <person name="Ishibashi T."/>
            <person name="Yamashita H."/>
            <person name="Murakawa K."/>
            <person name="Fujimori K."/>
            <person name="Tanai H."/>
            <person name="Kimata M."/>
            <person name="Watanabe M."/>
            <person name="Hiraoka S."/>
            <person name="Chiba Y."/>
            <person name="Ishida S."/>
            <person name="Ono Y."/>
            <person name="Takiguchi S."/>
            <person name="Watanabe S."/>
            <person name="Yosida M."/>
            <person name="Hotuta T."/>
            <person name="Kusano J."/>
            <person name="Kanehori K."/>
            <person name="Takahashi-Fujii A."/>
            <person name="Hara H."/>
            <person name="Tanase T.-O."/>
            <person name="Nomura Y."/>
            <person name="Togiya S."/>
            <person name="Komai F."/>
            <person name="Hara R."/>
            <person name="Takeuchi K."/>
            <person name="Arita M."/>
            <person name="Imose N."/>
            <person name="Musashino K."/>
            <person name="Yuuki H."/>
            <person name="Oshima A."/>
            <person name="Sasaki N."/>
            <person name="Aotsuka S."/>
            <person name="Yoshikawa Y."/>
            <person name="Matsunawa H."/>
            <person name="Ichihara T."/>
            <person name="Shiohata N."/>
            <person name="Sano S."/>
            <person name="Moriya S."/>
            <person name="Momiyama H."/>
            <person name="Satoh N."/>
            <person name="Takami S."/>
            <person name="Terashima Y."/>
            <person name="Suzuki O."/>
            <person name="Nakagawa S."/>
            <person name="Senoh A."/>
            <person name="Mizoguchi H."/>
            <person name="Goto Y."/>
            <person name="Shimizu F."/>
            <person name="Wakebe H."/>
            <person name="Hishigaki H."/>
            <person name="Watanabe T."/>
            <person name="Sugiyama A."/>
            <person name="Takemoto M."/>
            <person name="Kawakami B."/>
            <person name="Yamazaki M."/>
            <person name="Watanabe K."/>
            <person name="Kumagai A."/>
            <person name="Itakura S."/>
            <person name="Fukuzumi Y."/>
            <person name="Fujimori Y."/>
            <person name="Komiyama M."/>
            <person name="Tashiro H."/>
            <person name="Tanigami A."/>
            <person name="Fujiwara T."/>
            <person name="Ono T."/>
            <person name="Yamada K."/>
            <person name="Fujii Y."/>
            <person name="Ozaki K."/>
            <person name="Hirao M."/>
            <person name="Ohmori Y."/>
            <person name="Kawabata A."/>
            <person name="Hikiji T."/>
            <person name="Kobatake N."/>
            <person name="Inagaki H."/>
            <person name="Ikema Y."/>
            <person name="Okamoto S."/>
            <person name="Okitani R."/>
            <person name="Kawakami T."/>
            <person name="Noguchi S."/>
            <person name="Itoh T."/>
            <person name="Shigeta K."/>
            <person name="Senba T."/>
            <person name="Matsumura K."/>
            <person name="Nakajima Y."/>
            <person name="Mizuno T."/>
            <person name="Morinaga M."/>
            <person name="Sasaki M."/>
            <person name="Togashi T."/>
            <person name="Oyama M."/>
            <person name="Hata H."/>
            <person name="Watanabe M."/>
            <person name="Komatsu T."/>
            <person name="Mizushima-Sugano J."/>
            <person name="Satoh T."/>
            <person name="Shirai Y."/>
            <person name="Takahashi Y."/>
            <person name="Nakagawa K."/>
            <person name="Okumura K."/>
            <person name="Nagase T."/>
            <person name="Nomura N."/>
            <person name="Kikuchi H."/>
            <person name="Masuho Y."/>
            <person name="Yamashita R."/>
            <person name="Nakai K."/>
            <person name="Yada T."/>
            <person name="Nakamura Y."/>
            <person name="Ohara O."/>
            <person name="Isogai T."/>
            <person name="Sugano S."/>
        </authorList>
    </citation>
    <scope>NUCLEOTIDE SEQUENCE [LARGE SCALE MRNA] (ISOFORM 4)</scope>
    <source>
        <tissue>Tongue</tissue>
    </source>
</reference>
<reference key="2">
    <citation type="journal article" date="2004" name="Genome Res.">
        <title>The status, quality, and expansion of the NIH full-length cDNA project: the Mammalian Gene Collection (MGC).</title>
        <authorList>
            <consortium name="The MGC Project Team"/>
        </authorList>
    </citation>
    <scope>NUCLEOTIDE SEQUENCE [LARGE SCALE MRNA] (ISOFORMS 2 AND 3)</scope>
    <source>
        <tissue>Brain</tissue>
        <tissue>Testis</tissue>
    </source>
</reference>
<reference key="3">
    <citation type="journal article" date="2001" name="DNA Res.">
        <title>Prediction of the coding sequences of unidentified human genes. XX. The complete sequences of 100 new cDNA clones from brain which code for large proteins in vitro.</title>
        <authorList>
            <person name="Nagase T."/>
            <person name="Nakayama M."/>
            <person name="Nakajima D."/>
            <person name="Kikuno R."/>
            <person name="Ohara O."/>
        </authorList>
    </citation>
    <scope>NUCLEOTIDE SEQUENCE [LARGE SCALE MRNA] OF 206-717 (ISOFORM 1)</scope>
    <source>
        <tissue>Brain</tissue>
    </source>
</reference>
<organism>
    <name type="scientific">Homo sapiens</name>
    <name type="common">Human</name>
    <dbReference type="NCBI Taxonomy" id="9606"/>
    <lineage>
        <taxon>Eukaryota</taxon>
        <taxon>Metazoa</taxon>
        <taxon>Chordata</taxon>
        <taxon>Craniata</taxon>
        <taxon>Vertebrata</taxon>
        <taxon>Euteleostomi</taxon>
        <taxon>Mammalia</taxon>
        <taxon>Eutheria</taxon>
        <taxon>Euarchontoglires</taxon>
        <taxon>Primates</taxon>
        <taxon>Haplorrhini</taxon>
        <taxon>Catarrhini</taxon>
        <taxon>Hominidae</taxon>
        <taxon>Homo</taxon>
    </lineage>
</organism>
<keyword id="KW-0025">Alternative splicing</keyword>
<keyword id="KW-1267">Proteomics identification</keyword>
<keyword id="KW-1185">Reference proteome</keyword>
<sequence length="718" mass="82007">MSRGYSENNNFLNNNNQMVLDMILYPLIGIPQTINWETIARLVPGLTPKECAKRFDELKSSGSSPVDNQYNSLMAAGESPVETLATYIKSSLLDIHGEFQETPVGHDAVSKTGRHSIASTRNCSSESENCTTHNGGEMTEESEGPNMVIHVCDEAKNLKEDFTCPRDLLISEMKYFAEYLSMDAQRWEEVDISVHCDVHIFNWLIKYIKRNTKENKDCEMPTLEPGNVISILISSEFLKMDSLVEQCIQYCHKNMNAIVATPCNMNCINANLLTRIADLFSHNEVDDLKDKKDKFKSKLFCKKIERLFDPEYLNPDSRSNAATLYRCCLCKKLLTKETERRIPCIPGKINVDRRGNIVYIHIRDKTWDVHEYLNSLFEELKSWRDVYWRLWGTINWLTCSRCYQAFLCIEFSHCQYHSETVVYPTAASSLNTVGTGIYPCCNQKVLRFDPTQLTKGCKVRDHMVTLRDQGEGGDLPSCPTARMLDDLHKYRDVIVVPFSKDTVSDVGVGLCDEKGIECDVLLEPNTPWGPKTGELNAFLSLKNWTLQLKQQSLFSEEEEYTTGSEVTEDEVGDEEEVSKKQRKKEKPKKFTRQPKKQVSSPCAQRKEKALEKSASRDVSPFVMSMQKNKWDATRSLRFNQDAQREDDQRRMTEITGHLIKMRLGDLDRVKSKEAKEFAGGIYSRLEAQIKASVPVSARQSSSEKNTRSKSRFGQGRPA</sequence>
<comment type="function">
    <text evidence="1">Negatively regulates class switch recombination or isotype switching in splenic B-cells.</text>
</comment>
<comment type="subunit">
    <text evidence="1">Homodimer. Interacts (via the BTB domain) with HDAC1 and NCOR2.</text>
</comment>
<comment type="alternative products">
    <event type="alternative splicing"/>
    <isoform>
        <id>Q6NSI8-1</id>
        <name>1</name>
        <sequence type="displayed"/>
    </isoform>
    <isoform>
        <id>Q6NSI8-2</id>
        <name>2</name>
        <sequence type="described" ref="VSP_032302"/>
    </isoform>
    <isoform>
        <id>Q6NSI8-3</id>
        <name>3</name>
        <sequence type="described" ref="VSP_032299"/>
    </isoform>
    <isoform>
        <id>Q6NSI8-4</id>
        <name>4</name>
        <sequence type="described" ref="VSP_032300 VSP_032301"/>
    </isoform>
</comment>
<comment type="domain">
    <text evidence="1">The BTB domain is important for homodimerization and for its function in negative regulation of class switch recombination.</text>
</comment>
<comment type="similarity">
    <text evidence="7">Belongs to the KIAA1841 family.</text>
</comment>
<comment type="sequence caution" evidence="7">
    <conflict type="erroneous initiation">
        <sequence resource="EMBL-CDS" id="BAB47470"/>
    </conflict>
    <text>Extended N-terminus.</text>
</comment>
<accession>Q6NSI8</accession>
<accession>Q49AF0</accession>
<accession>Q6ZND0</accession>
<accession>Q96JI6</accession>
<protein>
    <recommendedName>
        <fullName evidence="8">SANT and BTB domain regulator of class switch recombination</fullName>
        <shortName>SANT and BTB domain regulator of CSR</shortName>
    </recommendedName>
</protein>
<name>SANBR_HUMAN</name>
<proteinExistence type="evidence at protein level"/>
<dbReference type="EMBL" id="AK131267">
    <property type="protein sequence ID" value="BAD18445.1"/>
    <property type="molecule type" value="mRNA"/>
</dbReference>
<dbReference type="EMBL" id="BC039298">
    <property type="protein sequence ID" value="AAH39298.1"/>
    <property type="molecule type" value="mRNA"/>
</dbReference>
<dbReference type="EMBL" id="BC070104">
    <property type="protein sequence ID" value="AAH70104.1"/>
    <property type="molecule type" value="mRNA"/>
</dbReference>
<dbReference type="EMBL" id="AB058744">
    <property type="protein sequence ID" value="BAB47470.1"/>
    <property type="status" value="ALT_INIT"/>
    <property type="molecule type" value="mRNA"/>
</dbReference>
<dbReference type="CCDS" id="CCDS1867.1">
    <molecule id="Q6NSI8-2"/>
</dbReference>
<dbReference type="CCDS" id="CCDS46296.1">
    <molecule id="Q6NSI8-1"/>
</dbReference>
<dbReference type="CCDS" id="CCDS82456.1">
    <molecule id="Q6NSI8-3"/>
</dbReference>
<dbReference type="RefSeq" id="NP_001123465.1">
    <molecule id="Q6NSI8-1"/>
    <property type="nucleotide sequence ID" value="NM_001129993.3"/>
</dbReference>
<dbReference type="RefSeq" id="NP_001317361.1">
    <molecule id="Q6NSI8-3"/>
    <property type="nucleotide sequence ID" value="NM_001330432.2"/>
</dbReference>
<dbReference type="RefSeq" id="NP_001317362.1">
    <molecule id="Q6NSI8-2"/>
    <property type="nucleotide sequence ID" value="NM_001330433.2"/>
</dbReference>
<dbReference type="RefSeq" id="NP_001317364.1">
    <molecule id="Q6NSI8-2"/>
    <property type="nucleotide sequence ID" value="NM_001330435.2"/>
</dbReference>
<dbReference type="RefSeq" id="NP_001317365.1">
    <molecule id="Q6NSI8-1"/>
    <property type="nucleotide sequence ID" value="NM_001330436.2"/>
</dbReference>
<dbReference type="RefSeq" id="NP_115895.2">
    <molecule id="Q6NSI8-2"/>
    <property type="nucleotide sequence ID" value="NM_032506.4"/>
</dbReference>
<dbReference type="RefSeq" id="XP_011531429.1">
    <property type="nucleotide sequence ID" value="XM_011533127.2"/>
</dbReference>
<dbReference type="SMR" id="Q6NSI8"/>
<dbReference type="BioGRID" id="124129">
    <property type="interactions" value="13"/>
</dbReference>
<dbReference type="FunCoup" id="Q6NSI8">
    <property type="interactions" value="836"/>
</dbReference>
<dbReference type="IntAct" id="Q6NSI8">
    <property type="interactions" value="9"/>
</dbReference>
<dbReference type="STRING" id="9606.ENSP00000385579"/>
<dbReference type="GlyGen" id="Q6NSI8">
    <property type="glycosylation" value="2 sites, 1 O-linked glycan (1 site)"/>
</dbReference>
<dbReference type="iPTMnet" id="Q6NSI8"/>
<dbReference type="PhosphoSitePlus" id="Q6NSI8"/>
<dbReference type="BioMuta" id="KIAA1841"/>
<dbReference type="DMDM" id="172046130"/>
<dbReference type="jPOST" id="Q6NSI8"/>
<dbReference type="MassIVE" id="Q6NSI8"/>
<dbReference type="PaxDb" id="9606-ENSP00000385579"/>
<dbReference type="PeptideAtlas" id="Q6NSI8"/>
<dbReference type="ProteomicsDB" id="66632">
    <molecule id="Q6NSI8-1"/>
</dbReference>
<dbReference type="ProteomicsDB" id="66633">
    <molecule id="Q6NSI8-2"/>
</dbReference>
<dbReference type="ProteomicsDB" id="66634">
    <molecule id="Q6NSI8-3"/>
</dbReference>
<dbReference type="ProteomicsDB" id="66635">
    <molecule id="Q6NSI8-4"/>
</dbReference>
<dbReference type="Antibodypedia" id="30587">
    <property type="antibodies" value="50 antibodies from 12 providers"/>
</dbReference>
<dbReference type="DNASU" id="84542"/>
<dbReference type="Ensembl" id="ENST00000295031.9">
    <molecule id="Q6NSI8-2"/>
    <property type="protein sequence ID" value="ENSP00000295031.5"/>
    <property type="gene ID" value="ENSG00000162929.14"/>
</dbReference>
<dbReference type="Ensembl" id="ENST00000356719.6">
    <molecule id="Q6NSI8-2"/>
    <property type="protein sequence ID" value="ENSP00000349154.3"/>
    <property type="gene ID" value="ENSG00000162929.14"/>
</dbReference>
<dbReference type="Ensembl" id="ENST00000402291.6">
    <molecule id="Q6NSI8-1"/>
    <property type="protein sequence ID" value="ENSP00000385579.1"/>
    <property type="gene ID" value="ENSG00000162929.14"/>
</dbReference>
<dbReference type="Ensembl" id="ENST00000453873.5">
    <molecule id="Q6NSI8-1"/>
    <property type="protein sequence ID" value="ENSP00000416795.1"/>
    <property type="gene ID" value="ENSG00000162929.14"/>
</dbReference>
<dbReference type="Ensembl" id="ENST00000612149.1">
    <molecule id="Q6NSI8-3"/>
    <property type="protein sequence ID" value="ENSP00000482126.1"/>
    <property type="gene ID" value="ENSG00000162929.14"/>
</dbReference>
<dbReference type="GeneID" id="84542"/>
<dbReference type="KEGG" id="hsa:84542"/>
<dbReference type="MANE-Select" id="ENST00000402291.6">
    <property type="protein sequence ID" value="ENSP00000385579.1"/>
    <property type="RefSeq nucleotide sequence ID" value="NM_001129993.3"/>
    <property type="RefSeq protein sequence ID" value="NP_001123465.1"/>
</dbReference>
<dbReference type="UCSC" id="uc002saw.5">
    <molecule id="Q6NSI8-1"/>
    <property type="organism name" value="human"/>
</dbReference>
<dbReference type="AGR" id="HGNC:29387"/>
<dbReference type="CTD" id="84542"/>
<dbReference type="DisGeNET" id="84542"/>
<dbReference type="GeneCards" id="SANBR"/>
<dbReference type="HGNC" id="HGNC:29387">
    <property type="gene designation" value="SANBR"/>
</dbReference>
<dbReference type="HPA" id="ENSG00000162929">
    <property type="expression patterns" value="Tissue enhanced (retina)"/>
</dbReference>
<dbReference type="MIM" id="620213">
    <property type="type" value="gene"/>
</dbReference>
<dbReference type="neXtProt" id="NX_Q6NSI8"/>
<dbReference type="OpenTargets" id="ENSG00000162929"/>
<dbReference type="VEuPathDB" id="HostDB:ENSG00000162929"/>
<dbReference type="eggNOG" id="ENOG502QRE4">
    <property type="taxonomic scope" value="Eukaryota"/>
</dbReference>
<dbReference type="GeneTree" id="ENSGT00390000008178"/>
<dbReference type="HOGENOM" id="CLU_016494_0_0_1"/>
<dbReference type="InParanoid" id="Q6NSI8"/>
<dbReference type="OMA" id="CHQAFLC"/>
<dbReference type="OrthoDB" id="550012at2759"/>
<dbReference type="PAN-GO" id="Q6NSI8">
    <property type="GO annotations" value="0 GO annotations based on evolutionary models"/>
</dbReference>
<dbReference type="PhylomeDB" id="Q6NSI8"/>
<dbReference type="TreeFam" id="TF324503"/>
<dbReference type="PathwayCommons" id="Q6NSI8"/>
<dbReference type="SignaLink" id="Q6NSI8"/>
<dbReference type="BioGRID-ORCS" id="84542">
    <property type="hits" value="23 hits in 1160 CRISPR screens"/>
</dbReference>
<dbReference type="ChiTaRS" id="KIAA1841">
    <property type="organism name" value="human"/>
</dbReference>
<dbReference type="GenomeRNAi" id="84542"/>
<dbReference type="Pharos" id="Q6NSI8">
    <property type="development level" value="Tdark"/>
</dbReference>
<dbReference type="PRO" id="PR:Q6NSI8"/>
<dbReference type="Proteomes" id="UP000005640">
    <property type="component" value="Chromosome 2"/>
</dbReference>
<dbReference type="RNAct" id="Q6NSI8">
    <property type="molecule type" value="protein"/>
</dbReference>
<dbReference type="Bgee" id="ENSG00000162929">
    <property type="expression patterns" value="Expressed in endothelial cell and 165 other cell types or tissues"/>
</dbReference>
<dbReference type="ExpressionAtlas" id="Q6NSI8">
    <property type="expression patterns" value="baseline and differential"/>
</dbReference>
<dbReference type="GO" id="GO:0042802">
    <property type="term" value="F:identical protein binding"/>
    <property type="evidence" value="ECO:0000250"/>
    <property type="project" value="UniProtKB"/>
</dbReference>
<dbReference type="GO" id="GO:0045190">
    <property type="term" value="P:isotype switching"/>
    <property type="evidence" value="ECO:0000250"/>
    <property type="project" value="UniProtKB"/>
</dbReference>
<dbReference type="CDD" id="cd14733">
    <property type="entry name" value="BACK"/>
    <property type="match status" value="1"/>
</dbReference>
<dbReference type="CDD" id="cd00167">
    <property type="entry name" value="SANT"/>
    <property type="match status" value="1"/>
</dbReference>
<dbReference type="Gene3D" id="3.30.710.10">
    <property type="entry name" value="Potassium Channel Kv1.1, Chain A"/>
    <property type="match status" value="1"/>
</dbReference>
<dbReference type="InterPro" id="IPR045902">
    <property type="entry name" value="SANBR-like"/>
</dbReference>
<dbReference type="InterPro" id="IPR021777">
    <property type="entry name" value="SANBR_BTB"/>
</dbReference>
<dbReference type="InterPro" id="IPR001005">
    <property type="entry name" value="SANT/Myb"/>
</dbReference>
<dbReference type="InterPro" id="IPR011333">
    <property type="entry name" value="SKP1/BTB/POZ_sf"/>
</dbReference>
<dbReference type="PANTHER" id="PTHR20946">
    <property type="entry name" value="SANT AND BTB DOMAIN REGULATOR OF CLASS SWITCH RECOMBINATION"/>
    <property type="match status" value="1"/>
</dbReference>
<dbReference type="PANTHER" id="PTHR20946:SF0">
    <property type="entry name" value="SANT AND BTB DOMAIN REGULATOR OF CLASS SWITCH RECOMBINATION"/>
    <property type="match status" value="1"/>
</dbReference>
<dbReference type="Pfam" id="PF11822">
    <property type="entry name" value="BTB_SANBR"/>
    <property type="match status" value="1"/>
</dbReference>
<evidence type="ECO:0000250" key="1">
    <source>
        <dbReference type="UniProtKB" id="Q68FF0"/>
    </source>
</evidence>
<evidence type="ECO:0000255" key="2">
    <source>
        <dbReference type="PROSITE-ProRule" id="PRU00037"/>
    </source>
</evidence>
<evidence type="ECO:0000255" key="3">
    <source>
        <dbReference type="PROSITE-ProRule" id="PRU00624"/>
    </source>
</evidence>
<evidence type="ECO:0000256" key="4">
    <source>
        <dbReference type="SAM" id="MobiDB-lite"/>
    </source>
</evidence>
<evidence type="ECO:0000303" key="5">
    <source>
    </source>
</evidence>
<evidence type="ECO:0000303" key="6">
    <source>
    </source>
</evidence>
<evidence type="ECO:0000305" key="7"/>
<evidence type="ECO:0000312" key="8">
    <source>
        <dbReference type="HGNC" id="HGNC:29387"/>
    </source>
</evidence>
<gene>
    <name evidence="8" type="primary">SANBR</name>
    <name type="synonym">KIAA1841</name>
</gene>
<feature type="chain" id="PRO_0000324598" description="SANT and BTB domain regulator of class switch recombination">
    <location>
        <begin position="1"/>
        <end position="718"/>
    </location>
</feature>
<feature type="domain" description="SANT" evidence="3">
    <location>
        <begin position="21"/>
        <end position="59"/>
    </location>
</feature>
<feature type="domain" description="BTB" evidence="2">
    <location>
        <begin position="147"/>
        <end position="255"/>
    </location>
</feature>
<feature type="region of interest" description="Disordered" evidence="4">
    <location>
        <begin position="118"/>
        <end position="142"/>
    </location>
</feature>
<feature type="region of interest" description="Disordered" evidence="4">
    <location>
        <begin position="555"/>
        <end position="622"/>
    </location>
</feature>
<feature type="region of interest" description="Disordered" evidence="4">
    <location>
        <begin position="692"/>
        <end position="718"/>
    </location>
</feature>
<feature type="compositionally biased region" description="Polar residues" evidence="4">
    <location>
        <begin position="118"/>
        <end position="134"/>
    </location>
</feature>
<feature type="compositionally biased region" description="Acidic residues" evidence="4">
    <location>
        <begin position="555"/>
        <end position="576"/>
    </location>
</feature>
<feature type="compositionally biased region" description="Basic residues" evidence="4">
    <location>
        <begin position="580"/>
        <end position="595"/>
    </location>
</feature>
<feature type="compositionally biased region" description="Basic and acidic residues" evidence="4">
    <location>
        <begin position="604"/>
        <end position="615"/>
    </location>
</feature>
<feature type="splice variant" id="VSP_032299" description="In isoform 3." evidence="6">
    <location>
        <begin position="1"/>
        <end position="146"/>
    </location>
</feature>
<feature type="splice variant" id="VSP_032300" description="In isoform 4." evidence="5">
    <original>DKTWDVHEYLNSLFEE</original>
    <variation>CREDKIHTCIFVYIYI</variation>
    <location>
        <begin position="364"/>
        <end position="379"/>
    </location>
</feature>
<feature type="splice variant" id="VSP_032301" description="In isoform 4." evidence="5">
    <location>
        <begin position="380"/>
        <end position="718"/>
    </location>
</feature>
<feature type="splice variant" id="VSP_032302" description="In isoform 2." evidence="6">
    <original>FAGGIYSRLEAQIKASVPVSARQSSSEKNTRSKSRFGQGRPA</original>
    <variation>TDKLRPRDGTVSKSNRKSGLSSVLLMTVLLC</variation>
    <location>
        <begin position="677"/>
        <end position="718"/>
    </location>
</feature>
<feature type="sequence conflict" description="In Ref. 3; BAB47470." evidence="7" ref="3">
    <original>Y</original>
    <variation>F</variation>
    <location>
        <position position="207"/>
    </location>
</feature>
<feature type="sequence conflict" description="In Ref. 2; AAH70104." evidence="7" ref="2">
    <original>N</original>
    <variation>S</variation>
    <location>
        <position position="215"/>
    </location>
</feature>
<feature type="sequence conflict" description="In Ref. 2; AAH70104." evidence="7" ref="2">
    <original>T</original>
    <variation>A</variation>
    <location>
        <position position="398"/>
    </location>
</feature>
<feature type="sequence conflict" description="In Ref. 2; AAH39298." evidence="7" ref="2">
    <original>Q</original>
    <variation>K</variation>
    <location>
        <position position="640"/>
    </location>
</feature>
<feature type="sequence variant" id="VAR_082836" description="In dbSNP:rs13424173." evidence="7">
    <original>G</original>
    <variation>S</variation>
    <location sequence="Q6NSI8-2">
        <position position="685"/>
    </location>
</feature>